<comment type="subunit">
    <text evidence="1">Part of the 50S ribosomal subunit. Binds 23S rRNA.</text>
</comment>
<comment type="similarity">
    <text evidence="1">Belongs to the eukaryotic ribosomal protein eL20 family.</text>
</comment>
<comment type="caution">
    <text evidence="4">Was originally thought to originate from S.solfataricus strain P1, but the culture was contaminated with S.acidocaldarius.</text>
</comment>
<comment type="sequence caution" evidence="3">
    <conflict type="frameshift">
        <sequence resource="EMBL-CDS" id="AAB19269"/>
    </conflict>
</comment>
<dbReference type="EMBL" id="X77509">
    <property type="protein sequence ID" value="CAA54641.1"/>
    <property type="molecule type" value="Genomic_DNA"/>
</dbReference>
<dbReference type="EMBL" id="CP000077">
    <property type="protein sequence ID" value="AAY80785.1"/>
    <property type="molecule type" value="Genomic_DNA"/>
</dbReference>
<dbReference type="EMBL" id="S38371">
    <property type="protein sequence ID" value="AAB19269.1"/>
    <property type="status" value="ALT_FRAME"/>
    <property type="molecule type" value="Genomic_DNA"/>
</dbReference>
<dbReference type="PIR" id="S15869">
    <property type="entry name" value="S15869"/>
</dbReference>
<dbReference type="PIR" id="S53701">
    <property type="entry name" value="S53701"/>
</dbReference>
<dbReference type="RefSeq" id="WP_011278287.1">
    <property type="nucleotide sequence ID" value="NC_007181.1"/>
</dbReference>
<dbReference type="PDB" id="8HKU">
    <property type="method" value="EM"/>
    <property type="resolution" value="2.72 A"/>
    <property type="chains" value="ALX0=4-79"/>
</dbReference>
<dbReference type="PDB" id="8HKV">
    <property type="method" value="EM"/>
    <property type="resolution" value="4.94 A"/>
    <property type="chains" value="ALX0=4-79"/>
</dbReference>
<dbReference type="PDB" id="8HKY">
    <property type="method" value="EM"/>
    <property type="resolution" value="4.45 A"/>
    <property type="chains" value="ALX0=4-79"/>
</dbReference>
<dbReference type="PDB" id="8HKZ">
    <property type="method" value="EM"/>
    <property type="resolution" value="4.78 A"/>
    <property type="chains" value="ALX0=4-79"/>
</dbReference>
<dbReference type="PDB" id="8HL1">
    <property type="method" value="EM"/>
    <property type="resolution" value="3.93 A"/>
    <property type="chains" value="ALX0=4-79"/>
</dbReference>
<dbReference type="PDB" id="8HL2">
    <property type="method" value="EM"/>
    <property type="resolution" value="4.10 A"/>
    <property type="chains" value="ALX0=4-79"/>
</dbReference>
<dbReference type="PDB" id="8HL3">
    <property type="method" value="EM"/>
    <property type="resolution" value="4.80 A"/>
    <property type="chains" value="ALX0=4-79"/>
</dbReference>
<dbReference type="PDB" id="8HL4">
    <property type="method" value="EM"/>
    <property type="resolution" value="4.62 A"/>
    <property type="chains" value="ALX0=4-79"/>
</dbReference>
<dbReference type="PDB" id="8HL5">
    <property type="method" value="EM"/>
    <property type="resolution" value="5.72 A"/>
    <property type="chains" value="ALX0=4-79"/>
</dbReference>
<dbReference type="PDBsum" id="8HKU"/>
<dbReference type="PDBsum" id="8HKV"/>
<dbReference type="PDBsum" id="8HKY"/>
<dbReference type="PDBsum" id="8HKZ"/>
<dbReference type="PDBsum" id="8HL1"/>
<dbReference type="PDBsum" id="8HL2"/>
<dbReference type="PDBsum" id="8HL3"/>
<dbReference type="PDBsum" id="8HL4"/>
<dbReference type="PDBsum" id="8HL5"/>
<dbReference type="EMDB" id="EMD-34860"/>
<dbReference type="EMDB" id="EMD-34861"/>
<dbReference type="EMDB" id="EMD-34863"/>
<dbReference type="EMDB" id="EMD-34864"/>
<dbReference type="EMDB" id="EMD-34866"/>
<dbReference type="EMDB" id="EMD-34867"/>
<dbReference type="EMDB" id="EMD-34868"/>
<dbReference type="EMDB" id="EMD-34869"/>
<dbReference type="EMDB" id="EMD-34870"/>
<dbReference type="SMR" id="P38613"/>
<dbReference type="STRING" id="330779.Saci_1464"/>
<dbReference type="GeneID" id="14551959"/>
<dbReference type="GeneID" id="78441807"/>
<dbReference type="KEGG" id="sai:Saci_1464"/>
<dbReference type="PATRIC" id="fig|330779.12.peg.1408"/>
<dbReference type="eggNOG" id="arCOG04175">
    <property type="taxonomic scope" value="Archaea"/>
</dbReference>
<dbReference type="HOGENOM" id="CLU_177460_0_0_2"/>
<dbReference type="Proteomes" id="UP000001018">
    <property type="component" value="Chromosome"/>
</dbReference>
<dbReference type="GO" id="GO:1990904">
    <property type="term" value="C:ribonucleoprotein complex"/>
    <property type="evidence" value="ECO:0007669"/>
    <property type="project" value="UniProtKB-KW"/>
</dbReference>
<dbReference type="GO" id="GO:0005840">
    <property type="term" value="C:ribosome"/>
    <property type="evidence" value="ECO:0007669"/>
    <property type="project" value="UniProtKB-KW"/>
</dbReference>
<dbReference type="GO" id="GO:0070180">
    <property type="term" value="F:large ribosomal subunit rRNA binding"/>
    <property type="evidence" value="ECO:0007669"/>
    <property type="project" value="UniProtKB-UniRule"/>
</dbReference>
<dbReference type="GO" id="GO:0003735">
    <property type="term" value="F:structural constituent of ribosome"/>
    <property type="evidence" value="ECO:0007669"/>
    <property type="project" value="InterPro"/>
</dbReference>
<dbReference type="GO" id="GO:0006412">
    <property type="term" value="P:translation"/>
    <property type="evidence" value="ECO:0007669"/>
    <property type="project" value="UniProtKB-UniRule"/>
</dbReference>
<dbReference type="Gene3D" id="3.10.20.10">
    <property type="match status" value="1"/>
</dbReference>
<dbReference type="HAMAP" id="MF_00273">
    <property type="entry name" value="Ribosomal_eL20"/>
    <property type="match status" value="1"/>
</dbReference>
<dbReference type="InterPro" id="IPR028877">
    <property type="entry name" value="Ribosomal_eL20"/>
</dbReference>
<dbReference type="InterPro" id="IPR023573">
    <property type="entry name" value="Ribosomal_eL20_dom"/>
</dbReference>
<dbReference type="NCBIfam" id="NF001981">
    <property type="entry name" value="PRK00773.1-1"/>
    <property type="match status" value="1"/>
</dbReference>
<dbReference type="Pfam" id="PF01775">
    <property type="entry name" value="Ribosomal_L18A"/>
    <property type="match status" value="1"/>
</dbReference>
<dbReference type="SUPFAM" id="SSF160374">
    <property type="entry name" value="RplX-like"/>
    <property type="match status" value="1"/>
</dbReference>
<evidence type="ECO:0000255" key="1">
    <source>
        <dbReference type="HAMAP-Rule" id="MF_00273"/>
    </source>
</evidence>
<evidence type="ECO:0000269" key="2">
    <source>
    </source>
</evidence>
<evidence type="ECO:0000305" key="3"/>
<evidence type="ECO:0000305" key="4">
    <source>
    </source>
</evidence>
<accession>P38613</accession>
<accession>P25488</accession>
<accession>Q4J8U5</accession>
<reference key="1">
    <citation type="journal article" date="1995" name="Biochim. Biophys. Acta">
        <title>Nucleotide sequence of a gene cluster encoding ribosomal proteins in the thermoacidophilic crenarchaeon Sulfolobus acidocaldarius.</title>
        <authorList>
            <person name="Moll R."/>
            <person name="Schmidtke S."/>
            <person name="Schaefer G."/>
        </authorList>
    </citation>
    <scope>NUCLEOTIDE SEQUENCE [GENOMIC DNA]</scope>
    <source>
        <strain>ATCC 33909 / DSM 639 / JCM 8929 / NBRC 15157 / NCIMB 11770</strain>
    </source>
</reference>
<reference key="2">
    <citation type="journal article" date="2005" name="J. Bacteriol.">
        <title>The genome of Sulfolobus acidocaldarius, a model organism of the Crenarchaeota.</title>
        <authorList>
            <person name="Chen L."/>
            <person name="Bruegger K."/>
            <person name="Skovgaard M."/>
            <person name="Redder P."/>
            <person name="She Q."/>
            <person name="Torarinsson E."/>
            <person name="Greve B."/>
            <person name="Awayez M."/>
            <person name="Zibat A."/>
            <person name="Klenk H.-P."/>
            <person name="Garrett R.A."/>
        </authorList>
    </citation>
    <scope>NUCLEOTIDE SEQUENCE [LARGE SCALE GENOMIC DNA]</scope>
    <source>
        <strain>ATCC 33909 / DSM 639 / JCM 8929 / NBRC 15157 / NCIMB 11770</strain>
    </source>
</reference>
<reference key="3">
    <citation type="journal article" date="1991" name="FEBS Lett.">
        <title>A small basic ribosomal protein from the extreme thermophilic archaebacterium Sulfolobus solfataricus that has no equivalent in Escherichia coli.</title>
        <authorList>
            <person name="Ramirez C."/>
            <person name="Louie K.A."/>
            <person name="Matheson A.T."/>
        </authorList>
    </citation>
    <scope>NUCLEOTIDE SEQUENCE [GENOMIC DNA] OF 1-75</scope>
    <scope>PROTEIN SEQUENCE OF 2-45</scope>
</reference>
<protein>
    <recommendedName>
        <fullName evidence="1">Large ribosomal subunit protein eL20</fullName>
    </recommendedName>
    <alternativeName>
        <fullName evidence="3">50S ribosomal protein L18Ae</fullName>
    </alternativeName>
    <alternativeName>
        <fullName evidence="1">50S ribosomal protein L20e</fullName>
    </alternativeName>
    <alternativeName>
        <fullName evidence="1">50S ribosomal protein LX</fullName>
    </alternativeName>
</protein>
<keyword id="KW-0002">3D-structure</keyword>
<keyword id="KW-0903">Direct protein sequencing</keyword>
<keyword id="KW-1185">Reference proteome</keyword>
<keyword id="KW-0687">Ribonucleoprotein</keyword>
<keyword id="KW-0689">Ribosomal protein</keyword>
<keyword id="KW-0694">RNA-binding</keyword>
<keyword id="KW-0699">rRNA-binding</keyword>
<name>RL18A_SULAC</name>
<gene>
    <name evidence="1" type="primary">rpl18a</name>
    <name type="synonym">rlx</name>
    <name evidence="1" type="synonym">rpl20e</name>
    <name evidence="1" type="synonym">rplX</name>
    <name type="ordered locus">Saci_1464</name>
</gene>
<sequence length="86" mass="10084">MAEVKIFMVRGTAIFSASRFPTSQKFTKYVRALNEKQAIEYIYSQLGGKNKIKRYNIHIQEIKEVKEDEITDKTIRDLAKLDKIIM</sequence>
<organism>
    <name type="scientific">Sulfolobus acidocaldarius (strain ATCC 33909 / DSM 639 / JCM 8929 / NBRC 15157 / NCIMB 11770)</name>
    <dbReference type="NCBI Taxonomy" id="330779"/>
    <lineage>
        <taxon>Archaea</taxon>
        <taxon>Thermoproteota</taxon>
        <taxon>Thermoprotei</taxon>
        <taxon>Sulfolobales</taxon>
        <taxon>Sulfolobaceae</taxon>
        <taxon>Sulfolobus</taxon>
    </lineage>
</organism>
<proteinExistence type="evidence at protein level"/>
<feature type="initiator methionine" description="Removed" evidence="2">
    <location>
        <position position="1"/>
    </location>
</feature>
<feature type="chain" id="PRO_0000153709" description="Large ribosomal subunit protein eL20">
    <location>
        <begin position="2"/>
        <end position="86"/>
    </location>
</feature>
<feature type="sequence conflict" description="In Ref. 3; AAB19269." evidence="3" ref="3">
    <location>
        <begin position="25"/>
        <end position="27"/>
    </location>
</feature>